<organism>
    <name type="scientific">Mycobacterium tuberculosis (strain ATCC 25618 / H37Rv)</name>
    <dbReference type="NCBI Taxonomy" id="83332"/>
    <lineage>
        <taxon>Bacteria</taxon>
        <taxon>Bacillati</taxon>
        <taxon>Actinomycetota</taxon>
        <taxon>Actinomycetes</taxon>
        <taxon>Mycobacteriales</taxon>
        <taxon>Mycobacteriaceae</taxon>
        <taxon>Mycobacterium</taxon>
        <taxon>Mycobacterium tuberculosis complex</taxon>
    </lineage>
</organism>
<protein>
    <recommendedName>
        <fullName evidence="1">D-aminoacyl-tRNA deacylase</fullName>
        <shortName evidence="1">DTD</shortName>
        <ecNumber evidence="1">3.1.1.96</ecNumber>
    </recommendedName>
    <alternativeName>
        <fullName evidence="1">Gly-tRNA(Ala) deacylase</fullName>
    </alternativeName>
</protein>
<accession>P9WNS9</accession>
<accession>L0TAX1</accession>
<accession>O07735</accession>
<accession>P63995</accession>
<name>DTD_MYCTU</name>
<evidence type="ECO:0000255" key="1">
    <source>
        <dbReference type="HAMAP-Rule" id="MF_00518"/>
    </source>
</evidence>
<comment type="function">
    <text evidence="1">An aminoacyl-tRNA editing enzyme that deacylates mischarged D-aminoacyl-tRNAs. Also deacylates mischarged glycyl-tRNA(Ala), protecting cells against glycine mischarging by AlaRS. Acts via tRNA-based rather than protein-based catalysis; rejects L-amino acids rather than detecting D-amino acids in the active site. By recycling D-aminoacyl-tRNA to D-amino acids and free tRNA molecules, this enzyme counteracts the toxicity associated with the formation of D-aminoacyl-tRNA entities in vivo and helps enforce protein L-homochirality.</text>
</comment>
<comment type="catalytic activity">
    <reaction evidence="1">
        <text>glycyl-tRNA(Ala) + H2O = tRNA(Ala) + glycine + H(+)</text>
        <dbReference type="Rhea" id="RHEA:53744"/>
        <dbReference type="Rhea" id="RHEA-COMP:9657"/>
        <dbReference type="Rhea" id="RHEA-COMP:13640"/>
        <dbReference type="ChEBI" id="CHEBI:15377"/>
        <dbReference type="ChEBI" id="CHEBI:15378"/>
        <dbReference type="ChEBI" id="CHEBI:57305"/>
        <dbReference type="ChEBI" id="CHEBI:78442"/>
        <dbReference type="ChEBI" id="CHEBI:78522"/>
        <dbReference type="EC" id="3.1.1.96"/>
    </reaction>
</comment>
<comment type="catalytic activity">
    <reaction evidence="1">
        <text>a D-aminoacyl-tRNA + H2O = a tRNA + a D-alpha-amino acid + H(+)</text>
        <dbReference type="Rhea" id="RHEA:13953"/>
        <dbReference type="Rhea" id="RHEA-COMP:10123"/>
        <dbReference type="Rhea" id="RHEA-COMP:10124"/>
        <dbReference type="ChEBI" id="CHEBI:15377"/>
        <dbReference type="ChEBI" id="CHEBI:15378"/>
        <dbReference type="ChEBI" id="CHEBI:59871"/>
        <dbReference type="ChEBI" id="CHEBI:78442"/>
        <dbReference type="ChEBI" id="CHEBI:79333"/>
        <dbReference type="EC" id="3.1.1.96"/>
    </reaction>
</comment>
<comment type="subunit">
    <text evidence="1">Homodimer.</text>
</comment>
<comment type="subcellular location">
    <subcellularLocation>
        <location evidence="1">Cytoplasm</location>
    </subcellularLocation>
</comment>
<comment type="domain">
    <text evidence="1">A Gly-cisPro motif from one monomer fits into the active site of the other monomer to allow specific chiral rejection of L-amino acids.</text>
</comment>
<comment type="miscellaneous">
    <text>Was identified as a high-confidence drug target.</text>
</comment>
<comment type="similarity">
    <text evidence="1">Belongs to the DTD family.</text>
</comment>
<feature type="chain" id="PRO_0000164562" description="D-aminoacyl-tRNA deacylase">
    <location>
        <begin position="1"/>
        <end position="143"/>
    </location>
</feature>
<feature type="short sequence motif" description="Gly-cisPro motif, important for rejection of L-amino acids" evidence="1">
    <location>
        <begin position="135"/>
        <end position="136"/>
    </location>
</feature>
<reference key="1">
    <citation type="journal article" date="1998" name="Nature">
        <title>Deciphering the biology of Mycobacterium tuberculosis from the complete genome sequence.</title>
        <authorList>
            <person name="Cole S.T."/>
            <person name="Brosch R."/>
            <person name="Parkhill J."/>
            <person name="Garnier T."/>
            <person name="Churcher C.M."/>
            <person name="Harris D.E."/>
            <person name="Gordon S.V."/>
            <person name="Eiglmeier K."/>
            <person name="Gas S."/>
            <person name="Barry C.E. III"/>
            <person name="Tekaia F."/>
            <person name="Badcock K."/>
            <person name="Basham D."/>
            <person name="Brown D."/>
            <person name="Chillingworth T."/>
            <person name="Connor R."/>
            <person name="Davies R.M."/>
            <person name="Devlin K."/>
            <person name="Feltwell T."/>
            <person name="Gentles S."/>
            <person name="Hamlin N."/>
            <person name="Holroyd S."/>
            <person name="Hornsby T."/>
            <person name="Jagels K."/>
            <person name="Krogh A."/>
            <person name="McLean J."/>
            <person name="Moule S."/>
            <person name="Murphy L.D."/>
            <person name="Oliver S."/>
            <person name="Osborne J."/>
            <person name="Quail M.A."/>
            <person name="Rajandream M.A."/>
            <person name="Rogers J."/>
            <person name="Rutter S."/>
            <person name="Seeger K."/>
            <person name="Skelton S."/>
            <person name="Squares S."/>
            <person name="Squares R."/>
            <person name="Sulston J.E."/>
            <person name="Taylor K."/>
            <person name="Whitehead S."/>
            <person name="Barrell B.G."/>
        </authorList>
    </citation>
    <scope>NUCLEOTIDE SEQUENCE [LARGE SCALE GENOMIC DNA]</scope>
    <source>
        <strain>ATCC 25618 / H37Rv</strain>
    </source>
</reference>
<reference key="2">
    <citation type="journal article" date="2008" name="BMC Syst. Biol.">
        <title>targetTB: a target identification pipeline for Mycobacterium tuberculosis through an interactome, reactome and genome-scale structural analysis.</title>
        <authorList>
            <person name="Raman K."/>
            <person name="Yeturu K."/>
            <person name="Chandra N."/>
        </authorList>
    </citation>
    <scope>IDENTIFICATION AS A DRUG TARGET [LARGE SCALE ANALYSIS]</scope>
</reference>
<reference key="3">
    <citation type="journal article" date="2011" name="Mol. Cell. Proteomics">
        <title>Proteogenomic analysis of Mycobacterium tuberculosis by high resolution mass spectrometry.</title>
        <authorList>
            <person name="Kelkar D.S."/>
            <person name="Kumar D."/>
            <person name="Kumar P."/>
            <person name="Balakrishnan L."/>
            <person name="Muthusamy B."/>
            <person name="Yadav A.K."/>
            <person name="Shrivastava P."/>
            <person name="Marimuthu A."/>
            <person name="Anand S."/>
            <person name="Sundaram H."/>
            <person name="Kingsbury R."/>
            <person name="Harsha H.C."/>
            <person name="Nair B."/>
            <person name="Prasad T.S."/>
            <person name="Chauhan D.S."/>
            <person name="Katoch K."/>
            <person name="Katoch V.M."/>
            <person name="Kumar P."/>
            <person name="Chaerkady R."/>
            <person name="Ramachandran S."/>
            <person name="Dash D."/>
            <person name="Pandey A."/>
        </authorList>
    </citation>
    <scope>IDENTIFICATION BY MASS SPECTROMETRY [LARGE SCALE ANALYSIS]</scope>
    <source>
        <strain>ATCC 25618 / H37Rv</strain>
    </source>
</reference>
<gene>
    <name evidence="1" type="primary">dtd</name>
    <name type="ordered locus">Rv1897c</name>
    <name type="ORF">MTCY180.21</name>
</gene>
<sequence length="143" mass="15116">MRVLVQRVSSAAVRVDGRVVGAIRPDGQGLVAFVGVTHGDDLDKARRLAEKLWNLRVLADEKSASDMHAPILVISQFTLYADTAKGRRPSWNAAAPGAVAQPLIAAFAAALRQLGAHVEAGVFGAHMQVELVNDGPVTVMLEG</sequence>
<proteinExistence type="evidence at protein level"/>
<dbReference type="EC" id="3.1.1.96" evidence="1"/>
<dbReference type="EMBL" id="AL123456">
    <property type="protein sequence ID" value="CCP44664.1"/>
    <property type="molecule type" value="Genomic_DNA"/>
</dbReference>
<dbReference type="PIR" id="F70517">
    <property type="entry name" value="F70517"/>
</dbReference>
<dbReference type="RefSeq" id="NP_216413.1">
    <property type="nucleotide sequence ID" value="NC_000962.3"/>
</dbReference>
<dbReference type="RefSeq" id="WP_003409533.1">
    <property type="nucleotide sequence ID" value="NZ_NVQJ01000013.1"/>
</dbReference>
<dbReference type="SMR" id="P9WNS9"/>
<dbReference type="FunCoup" id="P9WNS9">
    <property type="interactions" value="389"/>
</dbReference>
<dbReference type="STRING" id="83332.Rv1897c"/>
<dbReference type="PaxDb" id="83332-Rv1897c"/>
<dbReference type="DNASU" id="885893"/>
<dbReference type="GeneID" id="885893"/>
<dbReference type="KEGG" id="mtu:Rv1897c"/>
<dbReference type="KEGG" id="mtv:RVBD_1897c"/>
<dbReference type="TubercuList" id="Rv1897c"/>
<dbReference type="eggNOG" id="COG1490">
    <property type="taxonomic scope" value="Bacteria"/>
</dbReference>
<dbReference type="InParanoid" id="P9WNS9"/>
<dbReference type="OrthoDB" id="9801395at2"/>
<dbReference type="PhylomeDB" id="P9WNS9"/>
<dbReference type="Proteomes" id="UP000001584">
    <property type="component" value="Chromosome"/>
</dbReference>
<dbReference type="GO" id="GO:0005737">
    <property type="term" value="C:cytoplasm"/>
    <property type="evidence" value="ECO:0000318"/>
    <property type="project" value="GO_Central"/>
</dbReference>
<dbReference type="GO" id="GO:0051500">
    <property type="term" value="F:D-tyrosyl-tRNA(Tyr) deacylase activity"/>
    <property type="evidence" value="ECO:0000318"/>
    <property type="project" value="GO_Central"/>
</dbReference>
<dbReference type="GO" id="GO:0106026">
    <property type="term" value="F:Gly-tRNA(Ala) deacylase activity"/>
    <property type="evidence" value="ECO:0007669"/>
    <property type="project" value="UniProtKB-UniRule"/>
</dbReference>
<dbReference type="GO" id="GO:0043908">
    <property type="term" value="F:Ser(Gly)-tRNA(Ala) hydrolase activity"/>
    <property type="evidence" value="ECO:0007669"/>
    <property type="project" value="UniProtKB-UniRule"/>
</dbReference>
<dbReference type="GO" id="GO:0000049">
    <property type="term" value="F:tRNA binding"/>
    <property type="evidence" value="ECO:0007669"/>
    <property type="project" value="UniProtKB-UniRule"/>
</dbReference>
<dbReference type="GO" id="GO:0019478">
    <property type="term" value="P:D-amino acid catabolic process"/>
    <property type="evidence" value="ECO:0007669"/>
    <property type="project" value="UniProtKB-UniRule"/>
</dbReference>
<dbReference type="GO" id="GO:0006399">
    <property type="term" value="P:tRNA metabolic process"/>
    <property type="evidence" value="ECO:0000318"/>
    <property type="project" value="GO_Central"/>
</dbReference>
<dbReference type="CDD" id="cd00563">
    <property type="entry name" value="Dtyr_deacylase"/>
    <property type="match status" value="1"/>
</dbReference>
<dbReference type="FunFam" id="3.50.80.10:FF:000002">
    <property type="entry name" value="D-aminoacyl-tRNA deacylase"/>
    <property type="match status" value="1"/>
</dbReference>
<dbReference type="Gene3D" id="3.50.80.10">
    <property type="entry name" value="D-tyrosyl-tRNA(Tyr) deacylase"/>
    <property type="match status" value="1"/>
</dbReference>
<dbReference type="HAMAP" id="MF_00518">
    <property type="entry name" value="Deacylase_Dtd"/>
    <property type="match status" value="1"/>
</dbReference>
<dbReference type="InterPro" id="IPR003732">
    <property type="entry name" value="Daa-tRNA_deacyls_DTD"/>
</dbReference>
<dbReference type="InterPro" id="IPR023509">
    <property type="entry name" value="DTD-like_sf"/>
</dbReference>
<dbReference type="NCBIfam" id="TIGR00256">
    <property type="entry name" value="D-aminoacyl-tRNA deacylase"/>
    <property type="match status" value="1"/>
</dbReference>
<dbReference type="PANTHER" id="PTHR10472:SF5">
    <property type="entry name" value="D-AMINOACYL-TRNA DEACYLASE 1"/>
    <property type="match status" value="1"/>
</dbReference>
<dbReference type="PANTHER" id="PTHR10472">
    <property type="entry name" value="D-TYROSYL-TRNA TYR DEACYLASE"/>
    <property type="match status" value="1"/>
</dbReference>
<dbReference type="Pfam" id="PF02580">
    <property type="entry name" value="Tyr_Deacylase"/>
    <property type="match status" value="1"/>
</dbReference>
<dbReference type="SUPFAM" id="SSF69500">
    <property type="entry name" value="DTD-like"/>
    <property type="match status" value="1"/>
</dbReference>
<keyword id="KW-0963">Cytoplasm</keyword>
<keyword id="KW-0378">Hydrolase</keyword>
<keyword id="KW-1185">Reference proteome</keyword>
<keyword id="KW-0694">RNA-binding</keyword>
<keyword id="KW-0820">tRNA-binding</keyword>